<sequence length="141" mass="14860">MAKKVIKEVKLQIPAGKANPAPPVGPALGQAGVNIMGFCKEFNARTADQAGLIIPVVITVFEDRSFTFITKTPPAAVLLKKAAKVEKGSGEPNKTKVASVTRAQVQEIAETKMPDLNAANVESAMLMVEGTARSMGITIQD</sequence>
<feature type="chain" id="PRO_1000212780" description="Large ribosomal subunit protein uL11">
    <location>
        <begin position="1"/>
        <end position="141"/>
    </location>
</feature>
<reference key="1">
    <citation type="journal article" date="2012" name="BMC Genomics">
        <title>Comparative genomics and transcriptomics of lineages I, II, and III strains of Listeria monocytogenes.</title>
        <authorList>
            <person name="Hain T."/>
            <person name="Ghai R."/>
            <person name="Billion A."/>
            <person name="Kuenne C.T."/>
            <person name="Steinweg C."/>
            <person name="Izar B."/>
            <person name="Mohamed W."/>
            <person name="Mraheil M."/>
            <person name="Domann E."/>
            <person name="Schaffrath S."/>
            <person name="Karst U."/>
            <person name="Goesmann A."/>
            <person name="Oehm S."/>
            <person name="Puhler A."/>
            <person name="Merkl R."/>
            <person name="Vorwerk S."/>
            <person name="Glaser P."/>
            <person name="Garrido P."/>
            <person name="Rusniok C."/>
            <person name="Buchrieser C."/>
            <person name="Goebel W."/>
            <person name="Chakraborty T."/>
        </authorList>
    </citation>
    <scope>NUCLEOTIDE SEQUENCE [LARGE SCALE GENOMIC DNA]</scope>
    <source>
        <strain>CLIP80459</strain>
    </source>
</reference>
<keyword id="KW-0488">Methylation</keyword>
<keyword id="KW-0687">Ribonucleoprotein</keyword>
<keyword id="KW-0689">Ribosomal protein</keyword>
<keyword id="KW-0694">RNA-binding</keyword>
<keyword id="KW-0699">rRNA-binding</keyword>
<comment type="function">
    <text evidence="1">Forms part of the ribosomal stalk which helps the ribosome interact with GTP-bound translation factors.</text>
</comment>
<comment type="subunit">
    <text evidence="1">Part of the ribosomal stalk of the 50S ribosomal subunit. Interacts with L10 and the large rRNA to form the base of the stalk. L10 forms an elongated spine to which L12 dimers bind in a sequential fashion forming a multimeric L10(L12)X complex.</text>
</comment>
<comment type="PTM">
    <text evidence="1">One or more lysine residues are methylated.</text>
</comment>
<comment type="similarity">
    <text evidence="1">Belongs to the universal ribosomal protein uL11 family.</text>
</comment>
<protein>
    <recommendedName>
        <fullName evidence="1">Large ribosomal subunit protein uL11</fullName>
    </recommendedName>
    <alternativeName>
        <fullName evidence="2">50S ribosomal protein L11</fullName>
    </alternativeName>
</protein>
<evidence type="ECO:0000255" key="1">
    <source>
        <dbReference type="HAMAP-Rule" id="MF_00736"/>
    </source>
</evidence>
<evidence type="ECO:0000305" key="2"/>
<organism>
    <name type="scientific">Listeria monocytogenes serotype 4b (strain CLIP80459)</name>
    <dbReference type="NCBI Taxonomy" id="568819"/>
    <lineage>
        <taxon>Bacteria</taxon>
        <taxon>Bacillati</taxon>
        <taxon>Bacillota</taxon>
        <taxon>Bacilli</taxon>
        <taxon>Bacillales</taxon>
        <taxon>Listeriaceae</taxon>
        <taxon>Listeria</taxon>
    </lineage>
</organism>
<name>RL11_LISMC</name>
<dbReference type="EMBL" id="FM242711">
    <property type="protein sequence ID" value="CAS04035.1"/>
    <property type="molecule type" value="Genomic_DNA"/>
</dbReference>
<dbReference type="RefSeq" id="WP_003718336.1">
    <property type="nucleotide sequence ID" value="NC_012488.1"/>
</dbReference>
<dbReference type="SMR" id="C1KYI0"/>
<dbReference type="GeneID" id="93238162"/>
<dbReference type="KEGG" id="lmc:Lm4b_00268"/>
<dbReference type="HOGENOM" id="CLU_074237_2_1_9"/>
<dbReference type="GO" id="GO:0022625">
    <property type="term" value="C:cytosolic large ribosomal subunit"/>
    <property type="evidence" value="ECO:0007669"/>
    <property type="project" value="TreeGrafter"/>
</dbReference>
<dbReference type="GO" id="GO:0070180">
    <property type="term" value="F:large ribosomal subunit rRNA binding"/>
    <property type="evidence" value="ECO:0007669"/>
    <property type="project" value="UniProtKB-UniRule"/>
</dbReference>
<dbReference type="GO" id="GO:0003735">
    <property type="term" value="F:structural constituent of ribosome"/>
    <property type="evidence" value="ECO:0007669"/>
    <property type="project" value="InterPro"/>
</dbReference>
<dbReference type="GO" id="GO:0006412">
    <property type="term" value="P:translation"/>
    <property type="evidence" value="ECO:0007669"/>
    <property type="project" value="UniProtKB-UniRule"/>
</dbReference>
<dbReference type="CDD" id="cd00349">
    <property type="entry name" value="Ribosomal_L11"/>
    <property type="match status" value="1"/>
</dbReference>
<dbReference type="FunFam" id="1.10.10.250:FF:000001">
    <property type="entry name" value="50S ribosomal protein L11"/>
    <property type="match status" value="1"/>
</dbReference>
<dbReference type="FunFam" id="3.30.1550.10:FF:000001">
    <property type="entry name" value="50S ribosomal protein L11"/>
    <property type="match status" value="1"/>
</dbReference>
<dbReference type="Gene3D" id="1.10.10.250">
    <property type="entry name" value="Ribosomal protein L11, C-terminal domain"/>
    <property type="match status" value="1"/>
</dbReference>
<dbReference type="Gene3D" id="3.30.1550.10">
    <property type="entry name" value="Ribosomal protein L11/L12, N-terminal domain"/>
    <property type="match status" value="1"/>
</dbReference>
<dbReference type="HAMAP" id="MF_00736">
    <property type="entry name" value="Ribosomal_uL11"/>
    <property type="match status" value="1"/>
</dbReference>
<dbReference type="InterPro" id="IPR000911">
    <property type="entry name" value="Ribosomal_uL11"/>
</dbReference>
<dbReference type="InterPro" id="IPR006519">
    <property type="entry name" value="Ribosomal_uL11_bac-typ"/>
</dbReference>
<dbReference type="InterPro" id="IPR020783">
    <property type="entry name" value="Ribosomal_uL11_C"/>
</dbReference>
<dbReference type="InterPro" id="IPR036769">
    <property type="entry name" value="Ribosomal_uL11_C_sf"/>
</dbReference>
<dbReference type="InterPro" id="IPR020784">
    <property type="entry name" value="Ribosomal_uL11_N"/>
</dbReference>
<dbReference type="InterPro" id="IPR036796">
    <property type="entry name" value="Ribosomal_uL11_N_sf"/>
</dbReference>
<dbReference type="NCBIfam" id="TIGR01632">
    <property type="entry name" value="L11_bact"/>
    <property type="match status" value="1"/>
</dbReference>
<dbReference type="PANTHER" id="PTHR11661">
    <property type="entry name" value="60S RIBOSOMAL PROTEIN L12"/>
    <property type="match status" value="1"/>
</dbReference>
<dbReference type="PANTHER" id="PTHR11661:SF1">
    <property type="entry name" value="LARGE RIBOSOMAL SUBUNIT PROTEIN UL11M"/>
    <property type="match status" value="1"/>
</dbReference>
<dbReference type="Pfam" id="PF00298">
    <property type="entry name" value="Ribosomal_L11"/>
    <property type="match status" value="1"/>
</dbReference>
<dbReference type="Pfam" id="PF03946">
    <property type="entry name" value="Ribosomal_L11_N"/>
    <property type="match status" value="1"/>
</dbReference>
<dbReference type="SMART" id="SM00649">
    <property type="entry name" value="RL11"/>
    <property type="match status" value="1"/>
</dbReference>
<dbReference type="SUPFAM" id="SSF54747">
    <property type="entry name" value="Ribosomal L11/L12e N-terminal domain"/>
    <property type="match status" value="1"/>
</dbReference>
<dbReference type="SUPFAM" id="SSF46906">
    <property type="entry name" value="Ribosomal protein L11, C-terminal domain"/>
    <property type="match status" value="1"/>
</dbReference>
<accession>C1KYI0</accession>
<gene>
    <name evidence="1" type="primary">rplK</name>
    <name type="ordered locus">Lm4b_00268</name>
</gene>
<proteinExistence type="inferred from homology"/>